<protein>
    <recommendedName>
        <fullName>WAT1-related protein At1g44800</fullName>
    </recommendedName>
</protein>
<proteinExistence type="evidence at protein level"/>
<gene>
    <name type="ordered locus">At1g44800</name>
    <name type="ORF">T12C22.7</name>
</gene>
<organism>
    <name type="scientific">Arabidopsis thaliana</name>
    <name type="common">Mouse-ear cress</name>
    <dbReference type="NCBI Taxonomy" id="3702"/>
    <lineage>
        <taxon>Eukaryota</taxon>
        <taxon>Viridiplantae</taxon>
        <taxon>Streptophyta</taxon>
        <taxon>Embryophyta</taxon>
        <taxon>Tracheophyta</taxon>
        <taxon>Spermatophyta</taxon>
        <taxon>Magnoliopsida</taxon>
        <taxon>eudicotyledons</taxon>
        <taxon>Gunneridae</taxon>
        <taxon>Pentapetalae</taxon>
        <taxon>rosids</taxon>
        <taxon>malvids</taxon>
        <taxon>Brassicales</taxon>
        <taxon>Brassicaceae</taxon>
        <taxon>Camelineae</taxon>
        <taxon>Arabidopsis</taxon>
    </lineage>
</organism>
<comment type="interaction">
    <interactant intactId="EBI-4466346">
        <id>Q9LPF1</id>
    </interactant>
    <interactant intactId="EBI-4424378">
        <id>Q8VZW1</id>
        <label>NIP1-1</label>
    </interactant>
    <organismsDiffer>false</organismsDiffer>
    <experiments>2</experiments>
</comment>
<comment type="subcellular location">
    <subcellularLocation>
        <location evidence="1">Membrane</location>
        <topology evidence="3">Multi-pass membrane protein</topology>
    </subcellularLocation>
</comment>
<comment type="similarity">
    <text evidence="3">Belongs to the drug/metabolite transporter (DMT) superfamily. Plant drug/metabolite exporter (P-DME) (TC 2.A.7.4) family.</text>
</comment>
<comment type="sequence caution" evidence="3">
    <conflict type="erroneous initiation">
        <sequence resource="EMBL-CDS" id="AAM62626"/>
    </conflict>
    <text>Truncated N-terminus.</text>
</comment>
<name>WTR8_ARATH</name>
<sequence>MKGGSMEKIKPILAIISLQFGYAGMYIITMVSFKHGMDHWVLATYRHVVATVVMAPFALMFERKIRPKMTLAIFWRLLALGILEPLMDQNLYYIGLKNTSASYTSAFTNALPAVTFILALIFRLETVNFRKVHSVAKVVGTVITVGGAMIMTLYKGPAIEIVKAAHNSFHGGSSSTPTGQHWVLGTIAIMGSISTWAAFFILQSYTLKVYPAELSLVTLICGIGTILNAIASLIMVRDPSAWKIGMDSGTLAAVYSGVVCSGIAYYIQSIVIKQRGPVFTTSFSPMCMIITAFLGALVLAEKIHLGSIIGAVFIVLGLYSVVWGKSKDEVNPLDEKIVAKSQELPITNVVKQTNGHDVSGAPTNGVVTST</sequence>
<reference key="1">
    <citation type="journal article" date="2000" name="Nature">
        <title>Sequence and analysis of chromosome 1 of the plant Arabidopsis thaliana.</title>
        <authorList>
            <person name="Theologis A."/>
            <person name="Ecker J.R."/>
            <person name="Palm C.J."/>
            <person name="Federspiel N.A."/>
            <person name="Kaul S."/>
            <person name="White O."/>
            <person name="Alonso J."/>
            <person name="Altafi H."/>
            <person name="Araujo R."/>
            <person name="Bowman C.L."/>
            <person name="Brooks S.Y."/>
            <person name="Buehler E."/>
            <person name="Chan A."/>
            <person name="Chao Q."/>
            <person name="Chen H."/>
            <person name="Cheuk R.F."/>
            <person name="Chin C.W."/>
            <person name="Chung M.K."/>
            <person name="Conn L."/>
            <person name="Conway A.B."/>
            <person name="Conway A.R."/>
            <person name="Creasy T.H."/>
            <person name="Dewar K."/>
            <person name="Dunn P."/>
            <person name="Etgu P."/>
            <person name="Feldblyum T.V."/>
            <person name="Feng J.-D."/>
            <person name="Fong B."/>
            <person name="Fujii C.Y."/>
            <person name="Gill J.E."/>
            <person name="Goldsmith A.D."/>
            <person name="Haas B."/>
            <person name="Hansen N.F."/>
            <person name="Hughes B."/>
            <person name="Huizar L."/>
            <person name="Hunter J.L."/>
            <person name="Jenkins J."/>
            <person name="Johnson-Hopson C."/>
            <person name="Khan S."/>
            <person name="Khaykin E."/>
            <person name="Kim C.J."/>
            <person name="Koo H.L."/>
            <person name="Kremenetskaia I."/>
            <person name="Kurtz D.B."/>
            <person name="Kwan A."/>
            <person name="Lam B."/>
            <person name="Langin-Hooper S."/>
            <person name="Lee A."/>
            <person name="Lee J.M."/>
            <person name="Lenz C.A."/>
            <person name="Li J.H."/>
            <person name="Li Y.-P."/>
            <person name="Lin X."/>
            <person name="Liu S.X."/>
            <person name="Liu Z.A."/>
            <person name="Luros J.S."/>
            <person name="Maiti R."/>
            <person name="Marziali A."/>
            <person name="Militscher J."/>
            <person name="Miranda M."/>
            <person name="Nguyen M."/>
            <person name="Nierman W.C."/>
            <person name="Osborne B.I."/>
            <person name="Pai G."/>
            <person name="Peterson J."/>
            <person name="Pham P.K."/>
            <person name="Rizzo M."/>
            <person name="Rooney T."/>
            <person name="Rowley D."/>
            <person name="Sakano H."/>
            <person name="Salzberg S.L."/>
            <person name="Schwartz J.R."/>
            <person name="Shinn P."/>
            <person name="Southwick A.M."/>
            <person name="Sun H."/>
            <person name="Tallon L.J."/>
            <person name="Tambunga G."/>
            <person name="Toriumi M.J."/>
            <person name="Town C.D."/>
            <person name="Utterback T."/>
            <person name="Van Aken S."/>
            <person name="Vaysberg M."/>
            <person name="Vysotskaia V.S."/>
            <person name="Walker M."/>
            <person name="Wu D."/>
            <person name="Yu G."/>
            <person name="Fraser C.M."/>
            <person name="Venter J.C."/>
            <person name="Davis R.W."/>
        </authorList>
    </citation>
    <scope>NUCLEOTIDE SEQUENCE [LARGE SCALE GENOMIC DNA]</scope>
    <source>
        <strain>cv. Columbia</strain>
    </source>
</reference>
<reference key="2">
    <citation type="journal article" date="2017" name="Plant J.">
        <title>Araport11: a complete reannotation of the Arabidopsis thaliana reference genome.</title>
        <authorList>
            <person name="Cheng C.Y."/>
            <person name="Krishnakumar V."/>
            <person name="Chan A.P."/>
            <person name="Thibaud-Nissen F."/>
            <person name="Schobel S."/>
            <person name="Town C.D."/>
        </authorList>
    </citation>
    <scope>GENOME REANNOTATION</scope>
    <source>
        <strain>cv. Columbia</strain>
    </source>
</reference>
<reference key="3">
    <citation type="journal article" date="2003" name="Science">
        <title>Empirical analysis of transcriptional activity in the Arabidopsis genome.</title>
        <authorList>
            <person name="Yamada K."/>
            <person name="Lim J."/>
            <person name="Dale J.M."/>
            <person name="Chen H."/>
            <person name="Shinn P."/>
            <person name="Palm C.J."/>
            <person name="Southwick A.M."/>
            <person name="Wu H.C."/>
            <person name="Kim C.J."/>
            <person name="Nguyen M."/>
            <person name="Pham P.K."/>
            <person name="Cheuk R.F."/>
            <person name="Karlin-Newmann G."/>
            <person name="Liu S.X."/>
            <person name="Lam B."/>
            <person name="Sakano H."/>
            <person name="Wu T."/>
            <person name="Yu G."/>
            <person name="Miranda M."/>
            <person name="Quach H.L."/>
            <person name="Tripp M."/>
            <person name="Chang C.H."/>
            <person name="Lee J.M."/>
            <person name="Toriumi M.J."/>
            <person name="Chan M.M."/>
            <person name="Tang C.C."/>
            <person name="Onodera C.S."/>
            <person name="Deng J.M."/>
            <person name="Akiyama K."/>
            <person name="Ansari Y."/>
            <person name="Arakawa T."/>
            <person name="Banh J."/>
            <person name="Banno F."/>
            <person name="Bowser L."/>
            <person name="Brooks S.Y."/>
            <person name="Carninci P."/>
            <person name="Chao Q."/>
            <person name="Choy N."/>
            <person name="Enju A."/>
            <person name="Goldsmith A.D."/>
            <person name="Gurjal M."/>
            <person name="Hansen N.F."/>
            <person name="Hayashizaki Y."/>
            <person name="Johnson-Hopson C."/>
            <person name="Hsuan V.W."/>
            <person name="Iida K."/>
            <person name="Karnes M."/>
            <person name="Khan S."/>
            <person name="Koesema E."/>
            <person name="Ishida J."/>
            <person name="Jiang P.X."/>
            <person name="Jones T."/>
            <person name="Kawai J."/>
            <person name="Kamiya A."/>
            <person name="Meyers C."/>
            <person name="Nakajima M."/>
            <person name="Narusaka M."/>
            <person name="Seki M."/>
            <person name="Sakurai T."/>
            <person name="Satou M."/>
            <person name="Tamse R."/>
            <person name="Vaysberg M."/>
            <person name="Wallender E.K."/>
            <person name="Wong C."/>
            <person name="Yamamura Y."/>
            <person name="Yuan S."/>
            <person name="Shinozaki K."/>
            <person name="Davis R.W."/>
            <person name="Theologis A."/>
            <person name="Ecker J.R."/>
        </authorList>
    </citation>
    <scope>NUCLEOTIDE SEQUENCE [LARGE SCALE MRNA]</scope>
    <source>
        <strain>cv. Columbia</strain>
    </source>
</reference>
<reference key="4">
    <citation type="submission" date="2002-03" db="EMBL/GenBank/DDBJ databases">
        <title>Full-length cDNA from Arabidopsis thaliana.</title>
        <authorList>
            <person name="Brover V.V."/>
            <person name="Troukhan M.E."/>
            <person name="Alexandrov N.A."/>
            <person name="Lu Y.-P."/>
            <person name="Flavell R.B."/>
            <person name="Feldmann K.A."/>
        </authorList>
    </citation>
    <scope>NUCLEOTIDE SEQUENCE [LARGE SCALE MRNA]</scope>
</reference>
<accession>Q9LPF1</accession>
<accession>Q8LEI9</accession>
<dbReference type="EMBL" id="AC020576">
    <property type="protein sequence ID" value="AAF78263.1"/>
    <property type="molecule type" value="Genomic_DNA"/>
</dbReference>
<dbReference type="EMBL" id="CP002684">
    <property type="protein sequence ID" value="AEE32053.1"/>
    <property type="molecule type" value="Genomic_DNA"/>
</dbReference>
<dbReference type="EMBL" id="AY049306">
    <property type="protein sequence ID" value="AAK83648.1"/>
    <property type="molecule type" value="mRNA"/>
</dbReference>
<dbReference type="EMBL" id="AY149964">
    <property type="protein sequence ID" value="AAN31118.1"/>
    <property type="molecule type" value="mRNA"/>
</dbReference>
<dbReference type="EMBL" id="AY085398">
    <property type="protein sequence ID" value="AAM62626.1"/>
    <property type="status" value="ALT_INIT"/>
    <property type="molecule type" value="mRNA"/>
</dbReference>
<dbReference type="PIR" id="A96507">
    <property type="entry name" value="A96507"/>
</dbReference>
<dbReference type="RefSeq" id="NP_175101.1">
    <property type="nucleotide sequence ID" value="NM_103561.4"/>
</dbReference>
<dbReference type="SMR" id="Q9LPF1"/>
<dbReference type="BioGRID" id="26269">
    <property type="interactions" value="3"/>
</dbReference>
<dbReference type="FunCoup" id="Q9LPF1">
    <property type="interactions" value="3"/>
</dbReference>
<dbReference type="IntAct" id="Q9LPF1">
    <property type="interactions" value="3"/>
</dbReference>
<dbReference type="STRING" id="3702.Q9LPF1"/>
<dbReference type="TCDB" id="2.A.7.4.6">
    <property type="family name" value="the drug/metabolite transporter (dmt) superfamily"/>
</dbReference>
<dbReference type="iPTMnet" id="Q9LPF1"/>
<dbReference type="PaxDb" id="3702-AT1G44800.1"/>
<dbReference type="ProteomicsDB" id="242661"/>
<dbReference type="EnsemblPlants" id="AT1G44800.1">
    <property type="protein sequence ID" value="AT1G44800.1"/>
    <property type="gene ID" value="AT1G44800"/>
</dbReference>
<dbReference type="GeneID" id="841044"/>
<dbReference type="Gramene" id="AT1G44800.1">
    <property type="protein sequence ID" value="AT1G44800.1"/>
    <property type="gene ID" value="AT1G44800"/>
</dbReference>
<dbReference type="KEGG" id="ath:AT1G44800"/>
<dbReference type="Araport" id="AT1G44800"/>
<dbReference type="TAIR" id="AT1G44800">
    <property type="gene designation" value="SIAR1"/>
</dbReference>
<dbReference type="eggNOG" id="ENOG502QQ3S">
    <property type="taxonomic scope" value="Eukaryota"/>
</dbReference>
<dbReference type="HOGENOM" id="CLU_025359_1_1_1"/>
<dbReference type="InParanoid" id="Q9LPF1"/>
<dbReference type="OMA" id="PTGQHWV"/>
<dbReference type="PhylomeDB" id="Q9LPF1"/>
<dbReference type="PRO" id="PR:Q9LPF1"/>
<dbReference type="Proteomes" id="UP000006548">
    <property type="component" value="Chromosome 1"/>
</dbReference>
<dbReference type="ExpressionAtlas" id="Q9LPF1">
    <property type="expression patterns" value="baseline and differential"/>
</dbReference>
<dbReference type="GO" id="GO:0005886">
    <property type="term" value="C:plasma membrane"/>
    <property type="evidence" value="ECO:0000314"/>
    <property type="project" value="TAIR"/>
</dbReference>
<dbReference type="GO" id="GO:0015171">
    <property type="term" value="F:amino acid transmembrane transporter activity"/>
    <property type="evidence" value="ECO:0000314"/>
    <property type="project" value="TAIR"/>
</dbReference>
<dbReference type="GO" id="GO:0034639">
    <property type="term" value="F:L-amino acid efflux transmembrane transporter activity"/>
    <property type="evidence" value="ECO:0000314"/>
    <property type="project" value="TAIR"/>
</dbReference>
<dbReference type="GO" id="GO:0032973">
    <property type="term" value="P:amino acid export across plasma membrane"/>
    <property type="evidence" value="ECO:0000314"/>
    <property type="project" value="TAIR"/>
</dbReference>
<dbReference type="GO" id="GO:0043090">
    <property type="term" value="P:amino acid import"/>
    <property type="evidence" value="ECO:0000314"/>
    <property type="project" value="TAIR"/>
</dbReference>
<dbReference type="GO" id="GO:0006865">
    <property type="term" value="P:amino acid transport"/>
    <property type="evidence" value="ECO:0000314"/>
    <property type="project" value="TAIR"/>
</dbReference>
<dbReference type="GO" id="GO:0080144">
    <property type="term" value="P:intracellular amino acid homeostasis"/>
    <property type="evidence" value="ECO:0000315"/>
    <property type="project" value="TAIR"/>
</dbReference>
<dbReference type="InterPro" id="IPR000620">
    <property type="entry name" value="EamA_dom"/>
</dbReference>
<dbReference type="InterPro" id="IPR030184">
    <property type="entry name" value="WAT1-related"/>
</dbReference>
<dbReference type="PANTHER" id="PTHR31218">
    <property type="entry name" value="WAT1-RELATED PROTEIN"/>
    <property type="match status" value="1"/>
</dbReference>
<dbReference type="Pfam" id="PF00892">
    <property type="entry name" value="EamA"/>
    <property type="match status" value="2"/>
</dbReference>
<dbReference type="SUPFAM" id="SSF103481">
    <property type="entry name" value="Multidrug resistance efflux transporter EmrE"/>
    <property type="match status" value="2"/>
</dbReference>
<evidence type="ECO:0000250" key="1"/>
<evidence type="ECO:0000255" key="2"/>
<evidence type="ECO:0000305" key="3"/>
<keyword id="KW-0472">Membrane</keyword>
<keyword id="KW-1185">Reference proteome</keyword>
<keyword id="KW-0677">Repeat</keyword>
<keyword id="KW-0812">Transmembrane</keyword>
<keyword id="KW-1133">Transmembrane helix</keyword>
<feature type="chain" id="PRO_0000421316" description="WAT1-related protein At1g44800">
    <location>
        <begin position="1"/>
        <end position="370"/>
    </location>
</feature>
<feature type="transmembrane region" description="Helical" evidence="2">
    <location>
        <begin position="11"/>
        <end position="31"/>
    </location>
</feature>
<feature type="transmembrane region" description="Helical" evidence="2">
    <location>
        <begin position="41"/>
        <end position="61"/>
    </location>
</feature>
<feature type="transmembrane region" description="Helical" evidence="2">
    <location>
        <begin position="67"/>
        <end position="87"/>
    </location>
</feature>
<feature type="transmembrane region" description="Helical" evidence="2">
    <location>
        <begin position="102"/>
        <end position="122"/>
    </location>
</feature>
<feature type="transmembrane region" description="Helical" evidence="2">
    <location>
        <begin position="142"/>
        <end position="162"/>
    </location>
</feature>
<feature type="transmembrane region" description="Helical" evidence="2">
    <location>
        <begin position="182"/>
        <end position="202"/>
    </location>
</feature>
<feature type="transmembrane region" description="Helical" evidence="2">
    <location>
        <begin position="216"/>
        <end position="236"/>
    </location>
</feature>
<feature type="transmembrane region" description="Helical" evidence="2">
    <location>
        <begin position="252"/>
        <end position="272"/>
    </location>
</feature>
<feature type="transmembrane region" description="Helical" evidence="2">
    <location>
        <begin position="278"/>
        <end position="298"/>
    </location>
</feature>
<feature type="transmembrane region" description="Helical" evidence="2">
    <location>
        <begin position="303"/>
        <end position="323"/>
    </location>
</feature>
<feature type="domain" description="EamA 1">
    <location>
        <begin position="23"/>
        <end position="143"/>
    </location>
</feature>
<feature type="domain" description="EamA 2">
    <location>
        <begin position="195"/>
        <end position="322"/>
    </location>
</feature>
<feature type="sequence conflict" description="In Ref. 4; AAM62626." evidence="3" ref="4">
    <original>V</original>
    <variation>I</variation>
    <location>
        <position position="48"/>
    </location>
</feature>
<feature type="sequence conflict" description="In Ref. 4; AAM62626." evidence="3" ref="4">
    <original>L</original>
    <variation>V</variation>
    <location>
        <position position="316"/>
    </location>
</feature>
<feature type="sequence conflict" description="In Ref. 4; AAM62626." evidence="3" ref="4">
    <original>S</original>
    <variation>N</variation>
    <location>
        <position position="341"/>
    </location>
</feature>
<feature type="sequence conflict" description="In Ref. 4; AAM62626." evidence="3" ref="4">
    <original>S</original>
    <variation>A</variation>
    <location>
        <position position="359"/>
    </location>
</feature>